<accession>Q9Y4X3</accession>
<reference key="1">
    <citation type="journal article" date="1999" name="FEBS Lett.">
        <title>Molecular cloning of a novel CC chemokine, interleukin-11 receptor alpha-locus chemokine (ILC), which is located on chromosome 9p13 and a potential homologue of a CC chemokine encoded by molluscum contagiosum virus.</title>
        <authorList>
            <person name="Ishikawa-Mochizuki I."/>
            <person name="Kitaura M."/>
            <person name="Baba M."/>
            <person name="Nakayama T."/>
            <person name="Izawa D."/>
            <person name="Imai T."/>
            <person name="Yamada H."/>
            <person name="Hieshima K."/>
            <person name="Suzuki R."/>
            <person name="Nomiyama H."/>
            <person name="Yoshie O."/>
        </authorList>
    </citation>
    <scope>NUCLEOTIDE SEQUENCE [MRNA]</scope>
    <scope>PROTEIN SEQUENCE OF 25-30</scope>
    <source>
        <tissue>Thymus</tissue>
    </source>
</reference>
<reference key="2">
    <citation type="journal article" date="1999" name="Proc. Natl. Acad. Sci. U.S.A.">
        <title>CTACK, a skin-associated chemokine that preferentially attracts skin-homing memory T cells.</title>
        <authorList>
            <person name="Morales J."/>
            <person name="Homey B."/>
            <person name="Vicari A.P."/>
            <person name="Hudak S."/>
            <person name="Oldham E."/>
            <person name="Hedrick J."/>
            <person name="Orozco R."/>
            <person name="Copeland N.G."/>
            <person name="Jenkins N.A."/>
            <person name="McEvoy L.M."/>
            <person name="Zlotnik A."/>
        </authorList>
    </citation>
    <scope>NUCLEOTIDE SEQUENCE [MRNA]</scope>
</reference>
<reference key="3">
    <citation type="submission" date="1999-07" db="EMBL/GenBank/DDBJ databases">
        <title>CCL27, the human homologue of murine ALP chemokine.</title>
        <authorList>
            <person name="Zaballos A."/>
            <person name="Gutierrez J."/>
            <person name="Marquez G."/>
            <person name="Hromas R."/>
        </authorList>
    </citation>
    <scope>NUCLEOTIDE SEQUENCE [MRNA]</scope>
    <source>
        <tissue>Skin</tissue>
    </source>
</reference>
<reference key="4">
    <citation type="journal article" date="2000" name="J. Immunol.">
        <title>The orphan chemokine receptor G protein-coupled receptor-2 (GPR-2, CCR10) binds the skin-associated chemokine CCL27 (CTACK/ALP/ILC).</title>
        <authorList>
            <person name="Homey B."/>
            <person name="Wang W."/>
            <person name="Soto H."/>
            <person name="Buchanan M.E."/>
            <person name="Wiesenborn A."/>
            <person name="Catron D."/>
            <person name="Muller A."/>
            <person name="McClanahan T.K."/>
            <person name="Dieu-Nosjean M.C."/>
            <person name="Orozco R."/>
            <person name="Ruzicka T."/>
            <person name="Lehmann P."/>
            <person name="Oldham E."/>
            <person name="Zlotnik A."/>
        </authorList>
    </citation>
    <scope>RECEPTOR INTERACTION</scope>
</reference>
<reference key="5">
    <citation type="journal article" date="2016" name="J. Biol. Chem.">
        <title>The Anti-inflammatory Protein TSG-6 Regulates Chemokine Function by Inhibiting Chemokine/Glycosaminoglycan Interactions.</title>
        <authorList>
            <person name="Dyer D.P."/>
            <person name="Salanga C.L."/>
            <person name="Johns S.C."/>
            <person name="Valdambrini E."/>
            <person name="Fuster M.M."/>
            <person name="Milner C.M."/>
            <person name="Day A.J."/>
            <person name="Handel T.M."/>
        </authorList>
    </citation>
    <scope>INTERACTION WITH TNFAIP6</scope>
    <scope>MUTAGENESIS OF LYS-49</scope>
</reference>
<reference key="6">
    <citation type="journal article" date="2010" name="J. Biol. Chem.">
        <title>NMR analysis of the structure, dynamics, and unique oligomerization properties of the chemokine CCL27.</title>
        <authorList>
            <person name="Jansma A.L."/>
            <person name="Kirkpatrick J.P."/>
            <person name="Hsu A.R."/>
            <person name="Handel T.M."/>
            <person name="Nietlispach D."/>
        </authorList>
    </citation>
    <scope>STRUCTURE BY NMR OF 25-112</scope>
    <scope>SUBUNIT</scope>
    <scope>DISULFIDE BONDS</scope>
</reference>
<comment type="function">
    <text>Chemotactic factor that attracts skin-associated memory T-lymphocytes. May play a role in mediating homing of lymphocytes to cutaneous sites. Binds to CCR10.</text>
</comment>
<comment type="subunit">
    <text evidence="3 4">Monomer, dimer, and tetramer. Heparin avidly promotes oligomerization. Interacts with TNFAIP6 (via Link domain).</text>
</comment>
<comment type="interaction">
    <interactant intactId="EBI-16744026">
        <id>Q9Y4X3</id>
    </interactant>
    <interactant intactId="EBI-727357">
        <id>P51671</id>
        <label>CCL11</label>
    </interactant>
    <organismsDiffer>false</organismsDiffer>
    <experiments>2</experiments>
</comment>
<comment type="interaction">
    <interactant intactId="EBI-16744026">
        <id>Q9Y4X3</id>
    </interactant>
    <interactant intactId="EBI-2848366">
        <id>P13501</id>
        <label>CCL5</label>
    </interactant>
    <organismsDiffer>false</organismsDiffer>
    <experiments>2</experiments>
</comment>
<comment type="subcellular location">
    <subcellularLocation>
        <location evidence="1">Secreted</location>
    </subcellularLocation>
</comment>
<comment type="tissue specificity">
    <text>Testis, thymus, placenta, ovary and skin.</text>
</comment>
<comment type="similarity">
    <text evidence="5">Belongs to the intercrine beta (chemokine CC) family.</text>
</comment>
<comment type="online information" name="Wikipedia">
    <link uri="https://en.wikipedia.org/wiki/CCL27"/>
    <text>CCL27 entry</text>
</comment>
<evidence type="ECO:0000250" key="1">
    <source>
        <dbReference type="UniProtKB" id="Q9Z1X0"/>
    </source>
</evidence>
<evidence type="ECO:0000269" key="2">
    <source>
    </source>
</evidence>
<evidence type="ECO:0000269" key="3">
    <source>
    </source>
</evidence>
<evidence type="ECO:0000269" key="4">
    <source>
    </source>
</evidence>
<evidence type="ECO:0000305" key="5"/>
<evidence type="ECO:0007829" key="6">
    <source>
        <dbReference type="PDB" id="2KUM"/>
    </source>
</evidence>
<organism>
    <name type="scientific">Homo sapiens</name>
    <name type="common">Human</name>
    <dbReference type="NCBI Taxonomy" id="9606"/>
    <lineage>
        <taxon>Eukaryota</taxon>
        <taxon>Metazoa</taxon>
        <taxon>Chordata</taxon>
        <taxon>Craniata</taxon>
        <taxon>Vertebrata</taxon>
        <taxon>Euteleostomi</taxon>
        <taxon>Mammalia</taxon>
        <taxon>Eutheria</taxon>
        <taxon>Euarchontoglires</taxon>
        <taxon>Primates</taxon>
        <taxon>Haplorrhini</taxon>
        <taxon>Catarrhini</taxon>
        <taxon>Hominidae</taxon>
        <taxon>Homo</taxon>
    </lineage>
</organism>
<protein>
    <recommendedName>
        <fullName>C-C motif chemokine 27</fullName>
    </recommendedName>
    <alternativeName>
        <fullName>CC chemokine ILC</fullName>
    </alternativeName>
    <alternativeName>
        <fullName>Cutaneous T-cell-attracting chemokine</fullName>
        <shortName>CTACK</shortName>
    </alternativeName>
    <alternativeName>
        <fullName>ESkine</fullName>
    </alternativeName>
    <alternativeName>
        <fullName>IL-11 R-alpha-locus chemokine</fullName>
    </alternativeName>
    <alternativeName>
        <fullName>Skinkine</fullName>
    </alternativeName>
    <alternativeName>
        <fullName>Small-inducible cytokine A27</fullName>
    </alternativeName>
</protein>
<keyword id="KW-0002">3D-structure</keyword>
<keyword id="KW-0202">Cytokine</keyword>
<keyword id="KW-0903">Direct protein sequencing</keyword>
<keyword id="KW-1015">Disulfide bond</keyword>
<keyword id="KW-1267">Proteomics identification</keyword>
<keyword id="KW-1185">Reference proteome</keyword>
<keyword id="KW-0964">Secreted</keyword>
<keyword id="KW-0732">Signal</keyword>
<proteinExistence type="evidence at protein level"/>
<gene>
    <name type="primary">CCL27</name>
    <name type="synonym">ILC</name>
    <name type="synonym">SCYA27</name>
</gene>
<name>CCL27_HUMAN</name>
<dbReference type="EMBL" id="AB010445">
    <property type="protein sequence ID" value="BAA87046.1"/>
    <property type="molecule type" value="mRNA"/>
</dbReference>
<dbReference type="EMBL" id="AF082393">
    <property type="protein sequence ID" value="AAD41238.1"/>
    <property type="molecule type" value="mRNA"/>
</dbReference>
<dbReference type="EMBL" id="AJ243542">
    <property type="protein sequence ID" value="CAB46983.1"/>
    <property type="molecule type" value="mRNA"/>
</dbReference>
<dbReference type="CCDS" id="CCDS6569.1"/>
<dbReference type="RefSeq" id="NP_006655.1">
    <property type="nucleotide sequence ID" value="NM_006664.4"/>
</dbReference>
<dbReference type="PDB" id="2KUM">
    <property type="method" value="NMR"/>
    <property type="chains" value="A=25-112"/>
</dbReference>
<dbReference type="PDBsum" id="2KUM"/>
<dbReference type="BMRB" id="Q9Y4X3"/>
<dbReference type="SMR" id="Q9Y4X3"/>
<dbReference type="BioGRID" id="116061">
    <property type="interactions" value="5"/>
</dbReference>
<dbReference type="DIP" id="DIP-5872N"/>
<dbReference type="FunCoup" id="Q9Y4X3">
    <property type="interactions" value="641"/>
</dbReference>
<dbReference type="IntAct" id="Q9Y4X3">
    <property type="interactions" value="4"/>
</dbReference>
<dbReference type="STRING" id="9606.ENSP00000259631"/>
<dbReference type="GlyGen" id="Q9Y4X3">
    <property type="glycosylation" value="1 site"/>
</dbReference>
<dbReference type="iPTMnet" id="Q9Y4X3"/>
<dbReference type="PhosphoSitePlus" id="Q9Y4X3"/>
<dbReference type="BioMuta" id="CCL27"/>
<dbReference type="DMDM" id="7674366"/>
<dbReference type="MassIVE" id="Q9Y4X3"/>
<dbReference type="PaxDb" id="9606-ENSP00000259631"/>
<dbReference type="PeptideAtlas" id="Q9Y4X3"/>
<dbReference type="ProteomicsDB" id="86261"/>
<dbReference type="Antibodypedia" id="25618">
    <property type="antibodies" value="326 antibodies from 29 providers"/>
</dbReference>
<dbReference type="DNASU" id="10850"/>
<dbReference type="Ensembl" id="ENST00000259631.5">
    <property type="protein sequence ID" value="ENSP00000259631.4"/>
    <property type="gene ID" value="ENSG00000213927.4"/>
</dbReference>
<dbReference type="GeneID" id="10850"/>
<dbReference type="KEGG" id="hsa:10850"/>
<dbReference type="MANE-Select" id="ENST00000259631.5">
    <property type="protein sequence ID" value="ENSP00000259631.4"/>
    <property type="RefSeq nucleotide sequence ID" value="NM_006664.4"/>
    <property type="RefSeq protein sequence ID" value="NP_006655.1"/>
</dbReference>
<dbReference type="UCSC" id="uc003zvm.1">
    <property type="organism name" value="human"/>
</dbReference>
<dbReference type="AGR" id="HGNC:10626"/>
<dbReference type="CTD" id="10850"/>
<dbReference type="DisGeNET" id="10850"/>
<dbReference type="GeneCards" id="CCL27"/>
<dbReference type="HGNC" id="HGNC:10626">
    <property type="gene designation" value="CCL27"/>
</dbReference>
<dbReference type="HPA" id="ENSG00000213927">
    <property type="expression patterns" value="Tissue enriched (skin)"/>
</dbReference>
<dbReference type="MIM" id="604833">
    <property type="type" value="gene"/>
</dbReference>
<dbReference type="neXtProt" id="NX_Q9Y4X3"/>
<dbReference type="OpenTargets" id="ENSG00000213927"/>
<dbReference type="PharmGKB" id="PA35558"/>
<dbReference type="VEuPathDB" id="HostDB:ENSG00000213927"/>
<dbReference type="eggNOG" id="ENOG502SZGD">
    <property type="taxonomic scope" value="Eukaryota"/>
</dbReference>
<dbReference type="GeneTree" id="ENSGT00530000063923"/>
<dbReference type="HOGENOM" id="CLU_2339025_0_0_1"/>
<dbReference type="InParanoid" id="Q9Y4X3"/>
<dbReference type="OMA" id="SPSITCC"/>
<dbReference type="OrthoDB" id="8905061at2759"/>
<dbReference type="PAN-GO" id="Q9Y4X3">
    <property type="GO annotations" value="4 GO annotations based on evolutionary models"/>
</dbReference>
<dbReference type="PhylomeDB" id="Q9Y4X3"/>
<dbReference type="TreeFam" id="TF337014"/>
<dbReference type="PathwayCommons" id="Q9Y4X3"/>
<dbReference type="Reactome" id="R-HSA-380108">
    <property type="pathway name" value="Chemokine receptors bind chemokines"/>
</dbReference>
<dbReference type="Reactome" id="R-HSA-418594">
    <property type="pathway name" value="G alpha (i) signalling events"/>
</dbReference>
<dbReference type="SignaLink" id="Q9Y4X3"/>
<dbReference type="BioGRID-ORCS" id="10850">
    <property type="hits" value="21 hits in 1148 CRISPR screens"/>
</dbReference>
<dbReference type="EvolutionaryTrace" id="Q9Y4X3"/>
<dbReference type="GenomeRNAi" id="10850"/>
<dbReference type="Pharos" id="Q9Y4X3">
    <property type="development level" value="Tbio"/>
</dbReference>
<dbReference type="PRO" id="PR:Q9Y4X3"/>
<dbReference type="Proteomes" id="UP000005640">
    <property type="component" value="Chromosome 9"/>
</dbReference>
<dbReference type="RNAct" id="Q9Y4X3">
    <property type="molecule type" value="protein"/>
</dbReference>
<dbReference type="Bgee" id="ENSG00000213927">
    <property type="expression patterns" value="Expressed in skin of abdomen and 92 other cell types or tissues"/>
</dbReference>
<dbReference type="ExpressionAtlas" id="Q9Y4X3">
    <property type="expression patterns" value="baseline and differential"/>
</dbReference>
<dbReference type="GO" id="GO:0005576">
    <property type="term" value="C:extracellular region"/>
    <property type="evidence" value="ECO:0000304"/>
    <property type="project" value="Reactome"/>
</dbReference>
<dbReference type="GO" id="GO:0005615">
    <property type="term" value="C:extracellular space"/>
    <property type="evidence" value="ECO:0000318"/>
    <property type="project" value="GO_Central"/>
</dbReference>
<dbReference type="GO" id="GO:0031728">
    <property type="term" value="F:CCR3 chemokine receptor binding"/>
    <property type="evidence" value="ECO:0000353"/>
    <property type="project" value="UniProtKB"/>
</dbReference>
<dbReference type="GO" id="GO:0008009">
    <property type="term" value="F:chemokine activity"/>
    <property type="evidence" value="ECO:0000318"/>
    <property type="project" value="GO_Central"/>
</dbReference>
<dbReference type="GO" id="GO:0045236">
    <property type="term" value="F:CXCR chemokine receptor binding"/>
    <property type="evidence" value="ECO:0000318"/>
    <property type="project" value="GO_Central"/>
</dbReference>
<dbReference type="GO" id="GO:0061844">
    <property type="term" value="P:antimicrobial humoral immune response mediated by antimicrobial peptide"/>
    <property type="evidence" value="ECO:0000318"/>
    <property type="project" value="GO_Central"/>
</dbReference>
<dbReference type="GO" id="GO:0007267">
    <property type="term" value="P:cell-cell signaling"/>
    <property type="evidence" value="ECO:0000304"/>
    <property type="project" value="ProtInc"/>
</dbReference>
<dbReference type="GO" id="GO:0071222">
    <property type="term" value="P:cellular response to lipopolysaccharide"/>
    <property type="evidence" value="ECO:0000318"/>
    <property type="project" value="GO_Central"/>
</dbReference>
<dbReference type="GO" id="GO:0006935">
    <property type="term" value="P:chemotaxis"/>
    <property type="evidence" value="ECO:0000304"/>
    <property type="project" value="ProtInc"/>
</dbReference>
<dbReference type="GO" id="GO:0006955">
    <property type="term" value="P:immune response"/>
    <property type="evidence" value="ECO:0000304"/>
    <property type="project" value="ProtInc"/>
</dbReference>
<dbReference type="GO" id="GO:0006954">
    <property type="term" value="P:inflammatory response"/>
    <property type="evidence" value="ECO:0000318"/>
    <property type="project" value="GO_Central"/>
</dbReference>
<dbReference type="GO" id="GO:0030593">
    <property type="term" value="P:neutrophil chemotaxis"/>
    <property type="evidence" value="ECO:0000318"/>
    <property type="project" value="GO_Central"/>
</dbReference>
<dbReference type="FunFam" id="2.40.50.40:FF:000019">
    <property type="entry name" value="C-C motif chemokine 27"/>
    <property type="match status" value="1"/>
</dbReference>
<dbReference type="Gene3D" id="2.40.50.40">
    <property type="match status" value="1"/>
</dbReference>
<dbReference type="InterPro" id="IPR001811">
    <property type="entry name" value="Chemokine_IL8-like_dom"/>
</dbReference>
<dbReference type="InterPro" id="IPR036048">
    <property type="entry name" value="Interleukin_8-like_sf"/>
</dbReference>
<dbReference type="Pfam" id="PF00048">
    <property type="entry name" value="IL8"/>
    <property type="match status" value="1"/>
</dbReference>
<dbReference type="SUPFAM" id="SSF54117">
    <property type="entry name" value="Interleukin 8-like chemokines"/>
    <property type="match status" value="1"/>
</dbReference>
<sequence>MKGPPTFCSLLLLSLLLSPDPTAAFLLPPSTACCTQLYRKPLSDKLLRKVIQVELQEADGDCHLQAFVLHLAQRSICIHPQNPSLSQWFEHQERKLHGTLPKLNFGMLRKMG</sequence>
<feature type="signal peptide" evidence="2">
    <location>
        <begin position="1"/>
        <end position="24"/>
    </location>
</feature>
<feature type="chain" id="PRO_0000005239" description="C-C motif chemokine 27">
    <location>
        <begin position="25"/>
        <end position="112"/>
    </location>
</feature>
<feature type="disulfide bond" evidence="3">
    <location>
        <begin position="33"/>
        <end position="62"/>
    </location>
</feature>
<feature type="disulfide bond" evidence="3">
    <location>
        <begin position="34"/>
        <end position="77"/>
    </location>
</feature>
<feature type="sequence variant" id="VAR_022103" description="In dbSNP:rs11575594.">
    <original>I</original>
    <variation>V</variation>
    <location>
        <position position="78"/>
    </location>
</feature>
<feature type="sequence variant" id="VAR_022104" description="In dbSNP:rs11575584.">
    <original>L</original>
    <variation>F</variation>
    <location>
        <position position="96"/>
    </location>
</feature>
<feature type="mutagenesis site" description="9-fold reduction in binding affinity for Link domain of TNFAIP6." evidence="4">
    <original>K</original>
    <variation>A</variation>
    <location>
        <position position="49"/>
    </location>
</feature>
<feature type="helix" evidence="6">
    <location>
        <begin position="44"/>
        <end position="47"/>
    </location>
</feature>
<feature type="strand" evidence="6">
    <location>
        <begin position="52"/>
        <end position="56"/>
    </location>
</feature>
<feature type="turn" evidence="6">
    <location>
        <begin position="58"/>
        <end position="61"/>
    </location>
</feature>
<feature type="strand" evidence="6">
    <location>
        <begin position="62"/>
        <end position="64"/>
    </location>
</feature>
<feature type="strand" evidence="6">
    <location>
        <begin position="66"/>
        <end position="71"/>
    </location>
</feature>
<feature type="strand" evidence="6">
    <location>
        <begin position="74"/>
        <end position="78"/>
    </location>
</feature>
<feature type="helix" evidence="6">
    <location>
        <begin position="83"/>
        <end position="94"/>
    </location>
</feature>
<feature type="helix" evidence="6">
    <location>
        <begin position="96"/>
        <end position="98"/>
    </location>
</feature>
<feature type="turn" evidence="6">
    <location>
        <begin position="106"/>
        <end position="110"/>
    </location>
</feature>